<reference key="1">
    <citation type="journal article" date="2002" name="Nature">
        <title>The genome sequence and structure of rice chromosome 1.</title>
        <authorList>
            <person name="Sasaki T."/>
            <person name="Matsumoto T."/>
            <person name="Yamamoto K."/>
            <person name="Sakata K."/>
            <person name="Baba T."/>
            <person name="Katayose Y."/>
            <person name="Wu J."/>
            <person name="Niimura Y."/>
            <person name="Cheng Z."/>
            <person name="Nagamura Y."/>
            <person name="Antonio B.A."/>
            <person name="Kanamori H."/>
            <person name="Hosokawa S."/>
            <person name="Masukawa M."/>
            <person name="Arikawa K."/>
            <person name="Chiden Y."/>
            <person name="Hayashi M."/>
            <person name="Okamoto M."/>
            <person name="Ando T."/>
            <person name="Aoki H."/>
            <person name="Arita K."/>
            <person name="Hamada M."/>
            <person name="Harada C."/>
            <person name="Hijishita S."/>
            <person name="Honda M."/>
            <person name="Ichikawa Y."/>
            <person name="Idonuma A."/>
            <person name="Iijima M."/>
            <person name="Ikeda M."/>
            <person name="Ikeno M."/>
            <person name="Ito S."/>
            <person name="Ito T."/>
            <person name="Ito Y."/>
            <person name="Ito Y."/>
            <person name="Iwabuchi A."/>
            <person name="Kamiya K."/>
            <person name="Karasawa W."/>
            <person name="Katagiri S."/>
            <person name="Kikuta A."/>
            <person name="Kobayashi N."/>
            <person name="Kono I."/>
            <person name="Machita K."/>
            <person name="Maehara T."/>
            <person name="Mizuno H."/>
            <person name="Mizubayashi T."/>
            <person name="Mukai Y."/>
            <person name="Nagasaki H."/>
            <person name="Nakashima M."/>
            <person name="Nakama Y."/>
            <person name="Nakamichi Y."/>
            <person name="Nakamura M."/>
            <person name="Namiki N."/>
            <person name="Negishi M."/>
            <person name="Ohta I."/>
            <person name="Ono N."/>
            <person name="Saji S."/>
            <person name="Sakai K."/>
            <person name="Shibata M."/>
            <person name="Shimokawa T."/>
            <person name="Shomura A."/>
            <person name="Song J."/>
            <person name="Takazaki Y."/>
            <person name="Terasawa K."/>
            <person name="Tsuji K."/>
            <person name="Waki K."/>
            <person name="Yamagata H."/>
            <person name="Yamane H."/>
            <person name="Yoshiki S."/>
            <person name="Yoshihara R."/>
            <person name="Yukawa K."/>
            <person name="Zhong H."/>
            <person name="Iwama H."/>
            <person name="Endo T."/>
            <person name="Ito H."/>
            <person name="Hahn J.H."/>
            <person name="Kim H.-I."/>
            <person name="Eun M.-Y."/>
            <person name="Yano M."/>
            <person name="Jiang J."/>
            <person name="Gojobori T."/>
        </authorList>
    </citation>
    <scope>NUCLEOTIDE SEQUENCE [LARGE SCALE GENOMIC DNA]</scope>
    <source>
        <strain>cv. Nipponbare</strain>
    </source>
</reference>
<reference key="2">
    <citation type="journal article" date="2005" name="Nature">
        <title>The map-based sequence of the rice genome.</title>
        <authorList>
            <consortium name="International rice genome sequencing project (IRGSP)"/>
        </authorList>
    </citation>
    <scope>NUCLEOTIDE SEQUENCE [LARGE SCALE GENOMIC DNA]</scope>
    <source>
        <strain>cv. Nipponbare</strain>
    </source>
</reference>
<reference key="3">
    <citation type="journal article" date="2008" name="Nucleic Acids Res.">
        <title>The rice annotation project database (RAP-DB): 2008 update.</title>
        <authorList>
            <consortium name="The rice annotation project (RAP)"/>
        </authorList>
    </citation>
    <scope>GENOME REANNOTATION</scope>
    <source>
        <strain>cv. Nipponbare</strain>
    </source>
</reference>
<reference key="4">
    <citation type="journal article" date="2013" name="Rice">
        <title>Improvement of the Oryza sativa Nipponbare reference genome using next generation sequence and optical map data.</title>
        <authorList>
            <person name="Kawahara Y."/>
            <person name="de la Bastide M."/>
            <person name="Hamilton J.P."/>
            <person name="Kanamori H."/>
            <person name="McCombie W.R."/>
            <person name="Ouyang S."/>
            <person name="Schwartz D.C."/>
            <person name="Tanaka T."/>
            <person name="Wu J."/>
            <person name="Zhou S."/>
            <person name="Childs K.L."/>
            <person name="Davidson R.M."/>
            <person name="Lin H."/>
            <person name="Quesada-Ocampo L."/>
            <person name="Vaillancourt B."/>
            <person name="Sakai H."/>
            <person name="Lee S.S."/>
            <person name="Kim J."/>
            <person name="Numa H."/>
            <person name="Itoh T."/>
            <person name="Buell C.R."/>
            <person name="Matsumoto T."/>
        </authorList>
    </citation>
    <scope>GENOME REANNOTATION</scope>
    <source>
        <strain>cv. Nipponbare</strain>
    </source>
</reference>
<reference key="5">
    <citation type="journal article" date="2003" name="Science">
        <title>Collection, mapping, and annotation of over 28,000 cDNA clones from japonica rice.</title>
        <authorList>
            <consortium name="The rice full-length cDNA consortium"/>
        </authorList>
    </citation>
    <scope>NUCLEOTIDE SEQUENCE [LARGE SCALE MRNA]</scope>
    <source>
        <strain>cv. Nipponbare</strain>
    </source>
</reference>
<comment type="function">
    <text evidence="1">Catalyzes the phosphorylation of thiamine to thiamine pyrophosphate (TPP). TPP is an active cofactor for enzymes involved in glycolysis and energy production. Plant leaves require high levels of TPP for photosynthesis and carbohydrate metabolism (By similarity).</text>
</comment>
<comment type="catalytic activity">
    <reaction>
        <text>thiamine + ATP = thiamine diphosphate + AMP + H(+)</text>
        <dbReference type="Rhea" id="RHEA:11576"/>
        <dbReference type="ChEBI" id="CHEBI:15378"/>
        <dbReference type="ChEBI" id="CHEBI:18385"/>
        <dbReference type="ChEBI" id="CHEBI:30616"/>
        <dbReference type="ChEBI" id="CHEBI:58937"/>
        <dbReference type="ChEBI" id="CHEBI:456215"/>
        <dbReference type="EC" id="2.7.6.2"/>
    </reaction>
</comment>
<comment type="pathway">
    <text>Cofactor biosynthesis; thiamine diphosphate biosynthesis; thiamine diphosphate from thiamine: step 1/1.</text>
</comment>
<comment type="subcellular location">
    <subcellularLocation>
        <location evidence="1">Cytoplasm</location>
        <location evidence="1">Cytosol</location>
    </subcellularLocation>
</comment>
<comment type="similarity">
    <text evidence="3">Belongs to the thiamine pyrophosphokinase family.</text>
</comment>
<gene>
    <name type="primary">TPK1</name>
    <name type="ordered locus">Os01g0931400</name>
    <name type="ordered locus">LOC_Os01g70580</name>
    <name type="ORF">OSJNBa0052O12.42-1</name>
    <name type="ORF">P0506E04.20-1</name>
</gene>
<name>TPK1_ORYSJ</name>
<dbReference type="EC" id="2.7.6.2"/>
<dbReference type="EMBL" id="AP003272">
    <property type="protein sequence ID" value="BAD87327.1"/>
    <property type="molecule type" value="Genomic_DNA"/>
</dbReference>
<dbReference type="EMBL" id="AP004330">
    <property type="protein sequence ID" value="BAD88183.1"/>
    <property type="molecule type" value="Genomic_DNA"/>
</dbReference>
<dbReference type="EMBL" id="AP008207">
    <property type="protein sequence ID" value="BAF07211.1"/>
    <property type="molecule type" value="Genomic_DNA"/>
</dbReference>
<dbReference type="EMBL" id="AP014957">
    <property type="protein sequence ID" value="BAS76043.1"/>
    <property type="molecule type" value="Genomic_DNA"/>
</dbReference>
<dbReference type="EMBL" id="AK105048">
    <property type="protein sequence ID" value="BAG97081.1"/>
    <property type="molecule type" value="mRNA"/>
</dbReference>
<dbReference type="RefSeq" id="XP_015621775.1">
    <property type="nucleotide sequence ID" value="XM_015766289.1"/>
</dbReference>
<dbReference type="SMR" id="Q5JK24"/>
<dbReference type="FunCoup" id="Q5JK24">
    <property type="interactions" value="1352"/>
</dbReference>
<dbReference type="STRING" id="39947.Q5JK24"/>
<dbReference type="PaxDb" id="39947-Q5JK24"/>
<dbReference type="EnsemblPlants" id="Os01t0931400-02">
    <property type="protein sequence ID" value="Os01t0931400-02"/>
    <property type="gene ID" value="Os01g0931400"/>
</dbReference>
<dbReference type="Gramene" id="Os01t0931400-02">
    <property type="protein sequence ID" value="Os01t0931400-02"/>
    <property type="gene ID" value="Os01g0931400"/>
</dbReference>
<dbReference type="KEGG" id="dosa:Os01g0931400"/>
<dbReference type="eggNOG" id="KOG3153">
    <property type="taxonomic scope" value="Eukaryota"/>
</dbReference>
<dbReference type="HOGENOM" id="CLU_044237_0_2_1"/>
<dbReference type="InParanoid" id="Q5JK24"/>
<dbReference type="OMA" id="HHLYMMT"/>
<dbReference type="OrthoDB" id="25149at2759"/>
<dbReference type="UniPathway" id="UPA00060">
    <property type="reaction ID" value="UER00597"/>
</dbReference>
<dbReference type="Proteomes" id="UP000000763">
    <property type="component" value="Chromosome 1"/>
</dbReference>
<dbReference type="Proteomes" id="UP000059680">
    <property type="component" value="Chromosome 1"/>
</dbReference>
<dbReference type="ExpressionAtlas" id="Q5JK24">
    <property type="expression patterns" value="baseline and differential"/>
</dbReference>
<dbReference type="GO" id="GO:0005829">
    <property type="term" value="C:cytosol"/>
    <property type="evidence" value="ECO:0007669"/>
    <property type="project" value="UniProtKB-SubCell"/>
</dbReference>
<dbReference type="GO" id="GO:0005524">
    <property type="term" value="F:ATP binding"/>
    <property type="evidence" value="ECO:0007669"/>
    <property type="project" value="UniProtKB-KW"/>
</dbReference>
<dbReference type="GO" id="GO:0016301">
    <property type="term" value="F:kinase activity"/>
    <property type="evidence" value="ECO:0007669"/>
    <property type="project" value="UniProtKB-KW"/>
</dbReference>
<dbReference type="GO" id="GO:0030975">
    <property type="term" value="F:thiamine binding"/>
    <property type="evidence" value="ECO:0007669"/>
    <property type="project" value="InterPro"/>
</dbReference>
<dbReference type="GO" id="GO:0004788">
    <property type="term" value="F:thiamine diphosphokinase activity"/>
    <property type="evidence" value="ECO:0000318"/>
    <property type="project" value="GO_Central"/>
</dbReference>
<dbReference type="GO" id="GO:0009229">
    <property type="term" value="P:thiamine diphosphate biosynthetic process"/>
    <property type="evidence" value="ECO:0000318"/>
    <property type="project" value="GO_Central"/>
</dbReference>
<dbReference type="GO" id="GO:0006772">
    <property type="term" value="P:thiamine metabolic process"/>
    <property type="evidence" value="ECO:0007669"/>
    <property type="project" value="InterPro"/>
</dbReference>
<dbReference type="CDD" id="cd07995">
    <property type="entry name" value="TPK"/>
    <property type="match status" value="1"/>
</dbReference>
<dbReference type="FunFam" id="2.60.120.320:FF:000001">
    <property type="entry name" value="Thiamine pyrophosphokinase"/>
    <property type="match status" value="1"/>
</dbReference>
<dbReference type="FunFam" id="3.40.50.10240:FF:000001">
    <property type="entry name" value="Thiamine pyrophosphokinase"/>
    <property type="match status" value="1"/>
</dbReference>
<dbReference type="Gene3D" id="3.40.50.10240">
    <property type="entry name" value="Thiamin pyrophosphokinase, catalytic domain"/>
    <property type="match status" value="1"/>
</dbReference>
<dbReference type="Gene3D" id="2.60.120.320">
    <property type="entry name" value="Thiamin pyrophosphokinase, thiamin-binding domain"/>
    <property type="match status" value="1"/>
</dbReference>
<dbReference type="InterPro" id="IPR006282">
    <property type="entry name" value="Thi_PPkinase"/>
</dbReference>
<dbReference type="InterPro" id="IPR016966">
    <property type="entry name" value="Thiamin_pyrophosphokinase_euk"/>
</dbReference>
<dbReference type="InterPro" id="IPR007373">
    <property type="entry name" value="Thiamin_PyroPKinase_B1-bd"/>
</dbReference>
<dbReference type="InterPro" id="IPR036371">
    <property type="entry name" value="TPK_B1-bd_sf"/>
</dbReference>
<dbReference type="InterPro" id="IPR007371">
    <property type="entry name" value="TPK_catalytic"/>
</dbReference>
<dbReference type="InterPro" id="IPR036759">
    <property type="entry name" value="TPK_catalytic_sf"/>
</dbReference>
<dbReference type="NCBIfam" id="TIGR01378">
    <property type="entry name" value="thi_PPkinase"/>
    <property type="match status" value="1"/>
</dbReference>
<dbReference type="PANTHER" id="PTHR13622">
    <property type="entry name" value="THIAMIN PYROPHOSPHOKINASE"/>
    <property type="match status" value="1"/>
</dbReference>
<dbReference type="PANTHER" id="PTHR13622:SF12">
    <property type="entry name" value="THIAMINE PYROPHOSPHOKINASE 1"/>
    <property type="match status" value="1"/>
</dbReference>
<dbReference type="Pfam" id="PF04265">
    <property type="entry name" value="TPK_B1_binding"/>
    <property type="match status" value="1"/>
</dbReference>
<dbReference type="Pfam" id="PF04263">
    <property type="entry name" value="TPK_catalytic"/>
    <property type="match status" value="1"/>
</dbReference>
<dbReference type="PIRSF" id="PIRSF031057">
    <property type="entry name" value="Thiamin_pyrophosphokinase"/>
    <property type="match status" value="1"/>
</dbReference>
<dbReference type="SMART" id="SM00983">
    <property type="entry name" value="TPK_B1_binding"/>
    <property type="match status" value="1"/>
</dbReference>
<dbReference type="SUPFAM" id="SSF63999">
    <property type="entry name" value="Thiamin pyrophosphokinase, catalytic domain"/>
    <property type="match status" value="1"/>
</dbReference>
<dbReference type="SUPFAM" id="SSF63862">
    <property type="entry name" value="Thiamin pyrophosphokinase, substrate-binding domain"/>
    <property type="match status" value="1"/>
</dbReference>
<sequence>MPLPTMTHSSSFLRLPATSSPHPPPADDASAAYAVVVLNQRLPRFAPLLWDRARLRVCADGGANRVFDGMPELLPAEDPDQVRMRYKPDVIKGDMDSIRPEVKEYYSNLGAEIVDESHDQDTTDLHKCVSFITRNPPGSEESNLYILVLGALGGRFDHEMGNINVLYRFSNIRIVLLSDDCSIFLLPKTHSHEIHIERSIEGPHCGLIPMGSPSASTTTTGLRWNLDNTSMSYGGLISTSNIVEEETVRITSDSDLIWTISLRN</sequence>
<feature type="chain" id="PRO_0000423968" description="Thiamine pyrophosphokinase 1">
    <location>
        <begin position="1"/>
        <end position="264"/>
    </location>
</feature>
<feature type="region of interest" description="Disordered" evidence="2">
    <location>
        <begin position="1"/>
        <end position="27"/>
    </location>
</feature>
<feature type="compositionally biased region" description="Polar residues" evidence="2">
    <location>
        <begin position="1"/>
        <end position="12"/>
    </location>
</feature>
<organism>
    <name type="scientific">Oryza sativa subsp. japonica</name>
    <name type="common">Rice</name>
    <dbReference type="NCBI Taxonomy" id="39947"/>
    <lineage>
        <taxon>Eukaryota</taxon>
        <taxon>Viridiplantae</taxon>
        <taxon>Streptophyta</taxon>
        <taxon>Embryophyta</taxon>
        <taxon>Tracheophyta</taxon>
        <taxon>Spermatophyta</taxon>
        <taxon>Magnoliopsida</taxon>
        <taxon>Liliopsida</taxon>
        <taxon>Poales</taxon>
        <taxon>Poaceae</taxon>
        <taxon>BOP clade</taxon>
        <taxon>Oryzoideae</taxon>
        <taxon>Oryzeae</taxon>
        <taxon>Oryzinae</taxon>
        <taxon>Oryza</taxon>
        <taxon>Oryza sativa</taxon>
    </lineage>
</organism>
<protein>
    <recommendedName>
        <fullName>Thiamine pyrophosphokinase 1</fullName>
        <shortName>OsTPK1</shortName>
        <ecNumber>2.7.6.2</ecNumber>
    </recommendedName>
    <alternativeName>
        <fullName>Thiamine kinase 1</fullName>
    </alternativeName>
</protein>
<proteinExistence type="evidence at transcript level"/>
<keyword id="KW-0067">ATP-binding</keyword>
<keyword id="KW-0963">Cytoplasm</keyword>
<keyword id="KW-0418">Kinase</keyword>
<keyword id="KW-0547">Nucleotide-binding</keyword>
<keyword id="KW-1185">Reference proteome</keyword>
<keyword id="KW-0808">Transferase</keyword>
<evidence type="ECO:0000250" key="1"/>
<evidence type="ECO:0000256" key="2">
    <source>
        <dbReference type="SAM" id="MobiDB-lite"/>
    </source>
</evidence>
<evidence type="ECO:0000305" key="3"/>
<accession>Q5JK24</accession>
<accession>A0A0P0VCI1</accession>